<reference key="1">
    <citation type="journal article" date="2008" name="PLoS Genet.">
        <title>The genome of Borrelia recurrentis, the agent of deadly louse-borne relapsing fever, is a degraded subset of tick-borne Borrelia duttonii.</title>
        <authorList>
            <person name="Lescot M."/>
            <person name="Audic S."/>
            <person name="Robert C."/>
            <person name="Nguyen T.T."/>
            <person name="Blanc G."/>
            <person name="Cutler S.J."/>
            <person name="Wincker P."/>
            <person name="Couloux A."/>
            <person name="Claverie J.-M."/>
            <person name="Raoult D."/>
            <person name="Drancourt M."/>
        </authorList>
    </citation>
    <scope>NUCLEOTIDE SEQUENCE [LARGE SCALE GENOMIC DNA]</scope>
    <source>
        <strain>Ly</strain>
    </source>
</reference>
<sequence length="429" mass="47572">MARSKSQKIEGCSFCGRTRAEAEGKIISAKSVAICFECSKICHNLFKEESDKPASNKAPRGLPTPKQLKSHLDKYIIGQEDAKKVLSVAVYNHYKRIFKGSKRETGVELEKSNVLLVGPTGSGKTLLAKKLAAEMNVPFAIADATTLTEAGYVGEDVENILLKLIHAANGDVSFAERGIIYIDEIDKIAKKGENVSITRDVSGEGVQQSLLKIIEGTIANVPPRGGRKHPYEETIAINTHDILFICGGAFVGLENIIKKRINRSFIGFSSSSCKDTGGDNSLKYLEMEDLIKFGLIPEFVGRLPVHSYLDKLEKKDLMKILVEPENSIVRQYYHMFKMDNVDLLFEKDALDAIAEEAMLKNTGARGLRSILEELLKDVMFEIPSSKQIKKVIVTKDSVLNTNVEPLILTGRHVNKPWAKELYEINSKSN</sequence>
<keyword id="KW-0067">ATP-binding</keyword>
<keyword id="KW-0143">Chaperone</keyword>
<keyword id="KW-0479">Metal-binding</keyword>
<keyword id="KW-0547">Nucleotide-binding</keyword>
<keyword id="KW-0862">Zinc</keyword>
<feature type="chain" id="PRO_1000097923" description="ATP-dependent Clp protease ATP-binding subunit ClpX">
    <location>
        <begin position="1"/>
        <end position="429"/>
    </location>
</feature>
<feature type="domain" description="ClpX-type ZB" evidence="2">
    <location>
        <begin position="1"/>
        <end position="54"/>
    </location>
</feature>
<feature type="binding site" evidence="2">
    <location>
        <position position="12"/>
    </location>
    <ligand>
        <name>Zn(2+)</name>
        <dbReference type="ChEBI" id="CHEBI:29105"/>
    </ligand>
</feature>
<feature type="binding site" evidence="2">
    <location>
        <position position="15"/>
    </location>
    <ligand>
        <name>Zn(2+)</name>
        <dbReference type="ChEBI" id="CHEBI:29105"/>
    </ligand>
</feature>
<feature type="binding site" evidence="2">
    <location>
        <position position="35"/>
    </location>
    <ligand>
        <name>Zn(2+)</name>
        <dbReference type="ChEBI" id="CHEBI:29105"/>
    </ligand>
</feature>
<feature type="binding site" evidence="2">
    <location>
        <position position="38"/>
    </location>
    <ligand>
        <name>Zn(2+)</name>
        <dbReference type="ChEBI" id="CHEBI:29105"/>
    </ligand>
</feature>
<feature type="binding site" evidence="1">
    <location>
        <begin position="119"/>
        <end position="126"/>
    </location>
    <ligand>
        <name>ATP</name>
        <dbReference type="ChEBI" id="CHEBI:30616"/>
    </ligand>
</feature>
<proteinExistence type="inferred from homology"/>
<dbReference type="EMBL" id="CP000976">
    <property type="protein sequence ID" value="ACH93548.1"/>
    <property type="molecule type" value="Genomic_DNA"/>
</dbReference>
<dbReference type="RefSeq" id="WP_012538357.1">
    <property type="nucleotide sequence ID" value="NC_011229.1"/>
</dbReference>
<dbReference type="SMR" id="B5RMG2"/>
<dbReference type="STRING" id="412419.BDU_615"/>
<dbReference type="KEGG" id="bdu:BDU_615"/>
<dbReference type="eggNOG" id="COG1219">
    <property type="taxonomic scope" value="Bacteria"/>
</dbReference>
<dbReference type="HOGENOM" id="CLU_014218_8_2_12"/>
<dbReference type="OrthoDB" id="9804062at2"/>
<dbReference type="Proteomes" id="UP000000611">
    <property type="component" value="Chromosome"/>
</dbReference>
<dbReference type="GO" id="GO:0009376">
    <property type="term" value="C:HslUV protease complex"/>
    <property type="evidence" value="ECO:0007669"/>
    <property type="project" value="TreeGrafter"/>
</dbReference>
<dbReference type="GO" id="GO:0005524">
    <property type="term" value="F:ATP binding"/>
    <property type="evidence" value="ECO:0007669"/>
    <property type="project" value="UniProtKB-UniRule"/>
</dbReference>
<dbReference type="GO" id="GO:0016887">
    <property type="term" value="F:ATP hydrolysis activity"/>
    <property type="evidence" value="ECO:0007669"/>
    <property type="project" value="InterPro"/>
</dbReference>
<dbReference type="GO" id="GO:0140662">
    <property type="term" value="F:ATP-dependent protein folding chaperone"/>
    <property type="evidence" value="ECO:0007669"/>
    <property type="project" value="InterPro"/>
</dbReference>
<dbReference type="GO" id="GO:0046983">
    <property type="term" value="F:protein dimerization activity"/>
    <property type="evidence" value="ECO:0007669"/>
    <property type="project" value="InterPro"/>
</dbReference>
<dbReference type="GO" id="GO:0051082">
    <property type="term" value="F:unfolded protein binding"/>
    <property type="evidence" value="ECO:0007669"/>
    <property type="project" value="UniProtKB-UniRule"/>
</dbReference>
<dbReference type="GO" id="GO:0008270">
    <property type="term" value="F:zinc ion binding"/>
    <property type="evidence" value="ECO:0007669"/>
    <property type="project" value="InterPro"/>
</dbReference>
<dbReference type="GO" id="GO:0051301">
    <property type="term" value="P:cell division"/>
    <property type="evidence" value="ECO:0007669"/>
    <property type="project" value="TreeGrafter"/>
</dbReference>
<dbReference type="GO" id="GO:0051603">
    <property type="term" value="P:proteolysis involved in protein catabolic process"/>
    <property type="evidence" value="ECO:0007669"/>
    <property type="project" value="TreeGrafter"/>
</dbReference>
<dbReference type="CDD" id="cd19497">
    <property type="entry name" value="RecA-like_ClpX"/>
    <property type="match status" value="1"/>
</dbReference>
<dbReference type="FunFam" id="1.10.8.60:FF:000002">
    <property type="entry name" value="ATP-dependent Clp protease ATP-binding subunit ClpX"/>
    <property type="match status" value="1"/>
</dbReference>
<dbReference type="FunFam" id="3.40.50.300:FF:000005">
    <property type="entry name" value="ATP-dependent Clp protease ATP-binding subunit ClpX"/>
    <property type="match status" value="1"/>
</dbReference>
<dbReference type="Gene3D" id="1.10.8.60">
    <property type="match status" value="1"/>
</dbReference>
<dbReference type="Gene3D" id="6.20.220.10">
    <property type="entry name" value="ClpX chaperone, C4-type zinc finger domain"/>
    <property type="match status" value="1"/>
</dbReference>
<dbReference type="Gene3D" id="3.40.50.300">
    <property type="entry name" value="P-loop containing nucleotide triphosphate hydrolases"/>
    <property type="match status" value="1"/>
</dbReference>
<dbReference type="HAMAP" id="MF_00175">
    <property type="entry name" value="ClpX"/>
    <property type="match status" value="1"/>
</dbReference>
<dbReference type="InterPro" id="IPR003593">
    <property type="entry name" value="AAA+_ATPase"/>
</dbReference>
<dbReference type="InterPro" id="IPR050052">
    <property type="entry name" value="ATP-dep_Clp_protease_ClpX"/>
</dbReference>
<dbReference type="InterPro" id="IPR003959">
    <property type="entry name" value="ATPase_AAA_core"/>
</dbReference>
<dbReference type="InterPro" id="IPR019489">
    <property type="entry name" value="Clp_ATPase_C"/>
</dbReference>
<dbReference type="InterPro" id="IPR004487">
    <property type="entry name" value="Clp_protease_ATP-bd_su_ClpX"/>
</dbReference>
<dbReference type="InterPro" id="IPR046425">
    <property type="entry name" value="ClpX_bact"/>
</dbReference>
<dbReference type="InterPro" id="IPR027417">
    <property type="entry name" value="P-loop_NTPase"/>
</dbReference>
<dbReference type="InterPro" id="IPR010603">
    <property type="entry name" value="Znf_CppX_C4"/>
</dbReference>
<dbReference type="InterPro" id="IPR038366">
    <property type="entry name" value="Znf_CppX_C4_sf"/>
</dbReference>
<dbReference type="NCBIfam" id="TIGR00382">
    <property type="entry name" value="clpX"/>
    <property type="match status" value="1"/>
</dbReference>
<dbReference type="NCBIfam" id="NF003745">
    <property type="entry name" value="PRK05342.1"/>
    <property type="match status" value="1"/>
</dbReference>
<dbReference type="PANTHER" id="PTHR48102:SF7">
    <property type="entry name" value="ATP-DEPENDENT CLP PROTEASE ATP-BINDING SUBUNIT CLPX-LIKE, MITOCHONDRIAL"/>
    <property type="match status" value="1"/>
</dbReference>
<dbReference type="PANTHER" id="PTHR48102">
    <property type="entry name" value="ATP-DEPENDENT CLP PROTEASE ATP-BINDING SUBUNIT CLPX-LIKE, MITOCHONDRIAL-RELATED"/>
    <property type="match status" value="1"/>
</dbReference>
<dbReference type="Pfam" id="PF07724">
    <property type="entry name" value="AAA_2"/>
    <property type="match status" value="1"/>
</dbReference>
<dbReference type="Pfam" id="PF10431">
    <property type="entry name" value="ClpB_D2-small"/>
    <property type="match status" value="1"/>
</dbReference>
<dbReference type="Pfam" id="PF06689">
    <property type="entry name" value="zf-C4_ClpX"/>
    <property type="match status" value="1"/>
</dbReference>
<dbReference type="SMART" id="SM00382">
    <property type="entry name" value="AAA"/>
    <property type="match status" value="1"/>
</dbReference>
<dbReference type="SMART" id="SM01086">
    <property type="entry name" value="ClpB_D2-small"/>
    <property type="match status" value="1"/>
</dbReference>
<dbReference type="SMART" id="SM00994">
    <property type="entry name" value="zf-C4_ClpX"/>
    <property type="match status" value="1"/>
</dbReference>
<dbReference type="SUPFAM" id="SSF52540">
    <property type="entry name" value="P-loop containing nucleoside triphosphate hydrolases"/>
    <property type="match status" value="1"/>
</dbReference>
<dbReference type="PROSITE" id="PS51902">
    <property type="entry name" value="CLPX_ZB"/>
    <property type="match status" value="1"/>
</dbReference>
<protein>
    <recommendedName>
        <fullName evidence="1">ATP-dependent Clp protease ATP-binding subunit ClpX</fullName>
    </recommendedName>
</protein>
<comment type="function">
    <text evidence="1">ATP-dependent specificity component of the Clp protease. It directs the protease to specific substrates. Can perform chaperone functions in the absence of ClpP.</text>
</comment>
<comment type="subunit">
    <text evidence="1">Component of the ClpX-ClpP complex. Forms a hexameric ring that, in the presence of ATP, binds to fourteen ClpP subunits assembled into a disk-like structure with a central cavity, resembling the structure of eukaryotic proteasomes.</text>
</comment>
<comment type="similarity">
    <text evidence="1">Belongs to the ClpX chaperone family.</text>
</comment>
<accession>B5RMG2</accession>
<evidence type="ECO:0000255" key="1">
    <source>
        <dbReference type="HAMAP-Rule" id="MF_00175"/>
    </source>
</evidence>
<evidence type="ECO:0000255" key="2">
    <source>
        <dbReference type="PROSITE-ProRule" id="PRU01250"/>
    </source>
</evidence>
<gene>
    <name evidence="1" type="primary">clpX</name>
    <name type="ordered locus">BDU_615</name>
</gene>
<name>CLPX_BORDL</name>
<organism>
    <name type="scientific">Borrelia duttonii (strain Ly)</name>
    <dbReference type="NCBI Taxonomy" id="412419"/>
    <lineage>
        <taxon>Bacteria</taxon>
        <taxon>Pseudomonadati</taxon>
        <taxon>Spirochaetota</taxon>
        <taxon>Spirochaetia</taxon>
        <taxon>Spirochaetales</taxon>
        <taxon>Borreliaceae</taxon>
        <taxon>Borrelia</taxon>
    </lineage>
</organism>